<gene>
    <name type="primary">rpsU1</name>
    <name type="synonym">rpsU</name>
    <name type="synonym">rpsU-1</name>
    <name type="ordered locus">BMA2872</name>
</gene>
<evidence type="ECO:0000255" key="1">
    <source>
        <dbReference type="HAMAP-Rule" id="MF_00358"/>
    </source>
</evidence>
<evidence type="ECO:0000305" key="2"/>
<feature type="chain" id="PRO_0000178315" description="Small ribosomal subunit protein bS21A">
    <location>
        <begin position="1"/>
        <end position="70"/>
    </location>
</feature>
<protein>
    <recommendedName>
        <fullName evidence="1">Small ribosomal subunit protein bS21A</fullName>
    </recommendedName>
    <alternativeName>
        <fullName evidence="2">30S ribosomal protein S21 1</fullName>
    </alternativeName>
</protein>
<proteinExistence type="inferred from homology"/>
<comment type="similarity">
    <text evidence="2">Belongs to the bacterial ribosomal protein bS21 family.</text>
</comment>
<dbReference type="EMBL" id="CP000010">
    <property type="protein sequence ID" value="AAU48357.1"/>
    <property type="molecule type" value="Genomic_DNA"/>
</dbReference>
<dbReference type="EMBL" id="AF084815">
    <property type="protein sequence ID" value="AAD39080.1"/>
    <property type="molecule type" value="Genomic_DNA"/>
</dbReference>
<dbReference type="EMBL" id="AF084814">
    <property type="protein sequence ID" value="AAD39078.1"/>
    <property type="molecule type" value="Genomic_DNA"/>
</dbReference>
<dbReference type="RefSeq" id="WP_004198205.1">
    <property type="nucleotide sequence ID" value="NC_006348.1"/>
</dbReference>
<dbReference type="RefSeq" id="YP_104382.1">
    <property type="nucleotide sequence ID" value="NC_006348.1"/>
</dbReference>
<dbReference type="SMR" id="Q9WW25"/>
<dbReference type="GeneID" id="93061939"/>
<dbReference type="KEGG" id="bma:BMA2872"/>
<dbReference type="PATRIC" id="fig|243160.12.peg.2942"/>
<dbReference type="eggNOG" id="COG0828">
    <property type="taxonomic scope" value="Bacteria"/>
</dbReference>
<dbReference type="HOGENOM" id="CLU_159258_1_1_4"/>
<dbReference type="Proteomes" id="UP000006693">
    <property type="component" value="Chromosome 1"/>
</dbReference>
<dbReference type="GO" id="GO:1990904">
    <property type="term" value="C:ribonucleoprotein complex"/>
    <property type="evidence" value="ECO:0007669"/>
    <property type="project" value="UniProtKB-KW"/>
</dbReference>
<dbReference type="GO" id="GO:0005840">
    <property type="term" value="C:ribosome"/>
    <property type="evidence" value="ECO:0007669"/>
    <property type="project" value="UniProtKB-KW"/>
</dbReference>
<dbReference type="GO" id="GO:0003735">
    <property type="term" value="F:structural constituent of ribosome"/>
    <property type="evidence" value="ECO:0007669"/>
    <property type="project" value="InterPro"/>
</dbReference>
<dbReference type="GO" id="GO:0006412">
    <property type="term" value="P:translation"/>
    <property type="evidence" value="ECO:0007669"/>
    <property type="project" value="UniProtKB-UniRule"/>
</dbReference>
<dbReference type="Gene3D" id="1.20.5.1150">
    <property type="entry name" value="Ribosomal protein S8"/>
    <property type="match status" value="1"/>
</dbReference>
<dbReference type="HAMAP" id="MF_00358">
    <property type="entry name" value="Ribosomal_bS21"/>
    <property type="match status" value="1"/>
</dbReference>
<dbReference type="InterPro" id="IPR001911">
    <property type="entry name" value="Ribosomal_bS21"/>
</dbReference>
<dbReference type="InterPro" id="IPR038380">
    <property type="entry name" value="Ribosomal_bS21_sf"/>
</dbReference>
<dbReference type="NCBIfam" id="TIGR00030">
    <property type="entry name" value="S21p"/>
    <property type="match status" value="1"/>
</dbReference>
<dbReference type="PANTHER" id="PTHR21109">
    <property type="entry name" value="MITOCHONDRIAL 28S RIBOSOMAL PROTEIN S21"/>
    <property type="match status" value="1"/>
</dbReference>
<dbReference type="PANTHER" id="PTHR21109:SF22">
    <property type="entry name" value="SMALL RIBOSOMAL SUBUNIT PROTEIN BS21"/>
    <property type="match status" value="1"/>
</dbReference>
<dbReference type="Pfam" id="PF01165">
    <property type="entry name" value="Ribosomal_S21"/>
    <property type="match status" value="1"/>
</dbReference>
<dbReference type="PRINTS" id="PR00976">
    <property type="entry name" value="RIBOSOMALS21"/>
</dbReference>
<accession>Q9WW25</accession>
<accession>Q62FZ5</accession>
<organism>
    <name type="scientific">Burkholderia mallei (strain ATCC 23344)</name>
    <dbReference type="NCBI Taxonomy" id="243160"/>
    <lineage>
        <taxon>Bacteria</taxon>
        <taxon>Pseudomonadati</taxon>
        <taxon>Pseudomonadota</taxon>
        <taxon>Betaproteobacteria</taxon>
        <taxon>Burkholderiales</taxon>
        <taxon>Burkholderiaceae</taxon>
        <taxon>Burkholderia</taxon>
        <taxon>pseudomallei group</taxon>
    </lineage>
</organism>
<sequence length="70" mass="8363">MTTILLKENEPFEVAIRRFRRAIEKNGLIAELRERQAYEKPTAVRKRKKAAAVKRLHKRLRSQMLPKKLH</sequence>
<reference key="1">
    <citation type="journal article" date="2004" name="Proc. Natl. Acad. Sci. U.S.A.">
        <title>Structural flexibility in the Burkholderia mallei genome.</title>
        <authorList>
            <person name="Nierman W.C."/>
            <person name="DeShazer D."/>
            <person name="Kim H.S."/>
            <person name="Tettelin H."/>
            <person name="Nelson K.E."/>
            <person name="Feldblyum T.V."/>
            <person name="Ulrich R.L."/>
            <person name="Ronning C.M."/>
            <person name="Brinkac L.M."/>
            <person name="Daugherty S.C."/>
            <person name="Davidsen T.D."/>
            <person name="DeBoy R.T."/>
            <person name="Dimitrov G."/>
            <person name="Dodson R.J."/>
            <person name="Durkin A.S."/>
            <person name="Gwinn M.L."/>
            <person name="Haft D.H."/>
            <person name="Khouri H.M."/>
            <person name="Kolonay J.F."/>
            <person name="Madupu R."/>
            <person name="Mohammoud Y."/>
            <person name="Nelson W.C."/>
            <person name="Radune D."/>
            <person name="Romero C.M."/>
            <person name="Sarria S."/>
            <person name="Selengut J."/>
            <person name="Shamblin C."/>
            <person name="Sullivan S.A."/>
            <person name="White O."/>
            <person name="Yu Y."/>
            <person name="Zafar N."/>
            <person name="Zhou L."/>
            <person name="Fraser C.M."/>
        </authorList>
    </citation>
    <scope>NUCLEOTIDE SEQUENCE [LARGE SCALE GENOMIC DNA]</scope>
    <source>
        <strain>ATCC 23344</strain>
    </source>
</reference>
<reference key="2">
    <citation type="submission" date="1998-08" db="EMBL/GenBank/DDBJ databases">
        <title>PCR-based detection and differentiation of Burkholderia mallei and pseudomallei.</title>
        <authorList>
            <person name="Neubauer H."/>
            <person name="Splettstoesser W.D."/>
            <person name="Sprague L.D."/>
            <person name="Meyer H."/>
            <person name="Zysk G."/>
        </authorList>
    </citation>
    <scope>NUCLEOTIDE SEQUENCE [GENOMIC DNA] OF 1-63</scope>
    <source>
        <strain>ATCC 15310</strain>
        <strain>ATCC 23344</strain>
    </source>
</reference>
<name>RS21A_BURMA</name>
<keyword id="KW-1185">Reference proteome</keyword>
<keyword id="KW-0687">Ribonucleoprotein</keyword>
<keyword id="KW-0689">Ribosomal protein</keyword>